<dbReference type="EMBL" id="M35027">
    <property type="protein sequence ID" value="AAA48227.1"/>
    <property type="molecule type" value="Genomic_DNA"/>
</dbReference>
<dbReference type="EMBL" id="M35027">
    <property type="protein sequence ID" value="AAA47974.1"/>
    <property type="molecule type" value="Genomic_DNA"/>
</dbReference>
<dbReference type="PIR" id="H42528">
    <property type="entry name" value="H42528"/>
</dbReference>
<dbReference type="Proteomes" id="UP000008269">
    <property type="component" value="Segment"/>
</dbReference>
<organismHost>
    <name type="scientific">Homo sapiens</name>
    <name type="common">Human</name>
    <dbReference type="NCBI Taxonomy" id="9606"/>
</organismHost>
<name>VC21_VACCC</name>
<reference key="1">
    <citation type="journal article" date="1990" name="Virology">
        <title>The complete DNA sequence of vaccinia virus.</title>
        <authorList>
            <person name="Goebel S.J."/>
            <person name="Johnson G.P."/>
            <person name="Perkus M.E."/>
            <person name="Davis S.W."/>
            <person name="Winslow J.P."/>
            <person name="Paoletti E."/>
        </authorList>
    </citation>
    <scope>NUCLEOTIDE SEQUENCE [LARGE SCALE GENOMIC DNA]</scope>
</reference>
<reference key="2">
    <citation type="journal article" date="1990" name="Virology">
        <title>Appendix to 'The complete DNA sequence of vaccinia virus'.</title>
        <authorList>
            <person name="Goebel S.J."/>
            <person name="Johnson G.P."/>
            <person name="Perkus M.E."/>
            <person name="Davis S.W."/>
            <person name="Winslow J.P."/>
            <person name="Paoletti E."/>
        </authorList>
    </citation>
    <scope>COMPLETE GENOME</scope>
</reference>
<accession>P21105</accession>
<organism>
    <name type="scientific">Vaccinia virus (strain Copenhagen)</name>
    <name type="common">VACV</name>
    <dbReference type="NCBI Taxonomy" id="10249"/>
    <lineage>
        <taxon>Viruses</taxon>
        <taxon>Varidnaviria</taxon>
        <taxon>Bamfordvirae</taxon>
        <taxon>Nucleocytoviricota</taxon>
        <taxon>Pokkesviricetes</taxon>
        <taxon>Chitovirales</taxon>
        <taxon>Poxviridae</taxon>
        <taxon>Chordopoxvirinae</taxon>
        <taxon>Orthopoxvirus</taxon>
        <taxon>Vaccinia virus</taxon>
    </lineage>
</organism>
<keyword id="KW-1185">Reference proteome</keyword>
<gene>
    <name type="ORF">B27R</name>
</gene>
<gene>
    <name type="ORF">C21L</name>
</gene>
<proteinExistence type="predicted"/>
<protein>
    <recommendedName>
        <fullName>Protein C21/B27</fullName>
    </recommendedName>
</protein>
<sequence>MLPHTSDTTSTFRLKTVFDLVFENRNIIYKADVVNDIIHHRLKVSLPMIKSLFYKMSEFSPYDDYYVKKILAYCLLRDESFAELHSKFCLNEDYKSVFMKNISFDKIDSIIVT</sequence>
<feature type="chain" id="PRO_0000099421" description="Protein C21/B27">
    <location>
        <begin position="1"/>
        <end position="113"/>
    </location>
</feature>